<gene>
    <name evidence="2" type="primary">higB3</name>
    <name type="ordered locus">Rv3182</name>
    <name type="ordered locus">RVBD_3182</name>
    <name type="ORF">P425_03314</name>
</gene>
<proteinExistence type="inferred from homology"/>
<accession>O53332</accession>
<accession>F2GJP1</accession>
<accession>I6YFG2</accession>
<accession>L0TC23</accession>
<reference key="1">
    <citation type="journal article" date="1998" name="Nature">
        <title>Deciphering the biology of Mycobacterium tuberculosis from the complete genome sequence.</title>
        <authorList>
            <person name="Cole S.T."/>
            <person name="Brosch R."/>
            <person name="Parkhill J."/>
            <person name="Garnier T."/>
            <person name="Churcher C.M."/>
            <person name="Harris D.E."/>
            <person name="Gordon S.V."/>
            <person name="Eiglmeier K."/>
            <person name="Gas S."/>
            <person name="Barry C.E. III"/>
            <person name="Tekaia F."/>
            <person name="Badcock K."/>
            <person name="Basham D."/>
            <person name="Brown D."/>
            <person name="Chillingworth T."/>
            <person name="Connor R."/>
            <person name="Davies R.M."/>
            <person name="Devlin K."/>
            <person name="Feltwell T."/>
            <person name="Gentles S."/>
            <person name="Hamlin N."/>
            <person name="Holroyd S."/>
            <person name="Hornsby T."/>
            <person name="Jagels K."/>
            <person name="Krogh A."/>
            <person name="McLean J."/>
            <person name="Moule S."/>
            <person name="Murphy L.D."/>
            <person name="Oliver S."/>
            <person name="Osborne J."/>
            <person name="Quail M.A."/>
            <person name="Rajandream M.A."/>
            <person name="Rogers J."/>
            <person name="Rutter S."/>
            <person name="Seeger K."/>
            <person name="Skelton S."/>
            <person name="Squares S."/>
            <person name="Squares R."/>
            <person name="Sulston J.E."/>
            <person name="Taylor K."/>
            <person name="Whitehead S."/>
            <person name="Barrell B.G."/>
        </authorList>
    </citation>
    <scope>NUCLEOTIDE SEQUENCE [LARGE SCALE GENOMIC DNA]</scope>
    <source>
        <strain>ATCC 25618 / H37Rv</strain>
    </source>
</reference>
<reference key="2">
    <citation type="submission" date="2013-11" db="EMBL/GenBank/DDBJ databases">
        <title>The genome sequence of Mycobacterium tuberculosis H37Rv.</title>
        <authorList>
            <consortium name="The Broad Institute Genome Sequencing Platform"/>
            <person name="Galagan J."/>
            <person name="Kreiswirth B."/>
            <person name="Dobos K."/>
            <person name="Fortune S."/>
            <person name="Fitzgerald M."/>
            <person name="Young S.K."/>
            <person name="Zeng Q."/>
            <person name="Gargeya S."/>
            <person name="Abouelleil A."/>
            <person name="Alvarado L."/>
            <person name="Berlin A.M."/>
            <person name="Chapman S.B."/>
            <person name="Gainer-Dewar J."/>
            <person name="Goldberg J."/>
            <person name="Gnerre S."/>
            <person name="Griggs A."/>
            <person name="Gujja S."/>
            <person name="Hansen M."/>
            <person name="Howarth C."/>
            <person name="Imamovic A."/>
            <person name="Larimer J."/>
            <person name="McCowan C."/>
            <person name="Murphy C."/>
            <person name="Pearson M."/>
            <person name="Poon T."/>
            <person name="Priest M."/>
            <person name="Roberts A."/>
            <person name="Saif S."/>
            <person name="Shea T."/>
            <person name="Sykes S."/>
            <person name="Wortman J."/>
            <person name="Nusbaum C."/>
            <person name="Birren B."/>
        </authorList>
    </citation>
    <scope>NUCLEOTIDE SEQUENCE [LARGE SCALE GENOMIC DNA]</scope>
    <source>
        <strain>ATCC 25618 / H37Rv</strain>
    </source>
</reference>
<reference key="3">
    <citation type="submission" date="2014-04" db="EMBL/GenBank/DDBJ databases">
        <title>The genome sequence of Mycobacterium tuberculosis H37Rv.</title>
        <authorList>
            <consortium name="The Broad Institute Genomics Platform"/>
            <consortium name="The Broad Institute Genome Sequencing Center for Infectious Disease"/>
            <person name="Earl A.M."/>
            <person name="Kreiswirth B."/>
            <person name="Gomez J."/>
            <person name="Victor T."/>
            <person name="Desjardins C."/>
            <person name="Abeel T."/>
            <person name="Young S."/>
            <person name="Zeng Q."/>
            <person name="Gargeya S."/>
            <person name="Abouelleil A."/>
            <person name="Alvarado L."/>
            <person name="Chapman S.B."/>
            <person name="Gainer-Dewar J."/>
            <person name="Goldberg J."/>
            <person name="Griggs A."/>
            <person name="Gujja S."/>
            <person name="Hansen M."/>
            <person name="Howarth C."/>
            <person name="Imamovic A."/>
            <person name="Larimer J."/>
            <person name="Murphy C."/>
            <person name="Naylor J."/>
            <person name="Pearson M."/>
            <person name="Poon T.W."/>
            <person name="Priest M."/>
            <person name="Roberts A."/>
            <person name="Saif S."/>
            <person name="Shea T."/>
            <person name="Sykes S."/>
            <person name="Wortman J."/>
            <person name="Nusbaum C."/>
            <person name="Birren B."/>
        </authorList>
    </citation>
    <scope>NUCLEOTIDE SEQUENCE [LARGE SCALE GENOMIC DNA]</scope>
    <source>
        <strain>ATCC 25618 / H37Rv</strain>
    </source>
</reference>
<reference key="4">
    <citation type="journal article" date="2009" name="PLoS Genet.">
        <title>Comprehensive functional analysis of Mycobacterium tuberculosis toxin-antitoxin systems: implications for pathogenesis, stress responses, and evolution.</title>
        <authorList>
            <person name="Ramage H.R."/>
            <person name="Connolly L.E."/>
            <person name="Cox J.S."/>
        </authorList>
    </citation>
    <scope>EXPRESSION IN M.SMEGMATIS</scope>
    <source>
        <strain>ATCC 35801 / TMC 107 / Erdman</strain>
    </source>
</reference>
<reference key="5">
    <citation type="journal article" date="2014" name="Toxins">
        <title>Multiple toxin-antitoxin systems in Mycobacterium tuberculosis.</title>
        <authorList>
            <person name="Sala A."/>
            <person name="Bordes P."/>
            <person name="Genevaux P."/>
        </authorList>
    </citation>
    <scope>DISCUSSION OF POSSIBLE FUNCTION</scope>
    <source>
        <strain>ATCC 25618 / H37Rv</strain>
    </source>
</reference>
<comment type="function">
    <text evidence="1 4">Putative toxic component of a type II toxin-antitoxin (TA) system. Its cognate antitoxin would be HigA3. Not toxic upon expression in M.smegmatis.</text>
</comment>
<comment type="similarity">
    <text evidence="3">Belongs to the mycobacterial HigB family.</text>
</comment>
<sequence>MAVILLPQVERWFFALNRDAMASVTGAIDLLEMEGPTLGRPVVDKVNDSTFHNMKELRPAGTSIRILFAFDPARQAILLLGGDKAGNWKRWYDNNIPIADQRSENWLASEHGGG</sequence>
<evidence type="ECO:0000269" key="1">
    <source>
    </source>
</evidence>
<evidence type="ECO:0000303" key="2">
    <source>
    </source>
</evidence>
<evidence type="ECO:0000305" key="3"/>
<evidence type="ECO:0000305" key="4">
    <source>
    </source>
</evidence>
<dbReference type="EMBL" id="AL123456">
    <property type="protein sequence ID" value="CCP45993.1"/>
    <property type="molecule type" value="Genomic_DNA"/>
</dbReference>
<dbReference type="EMBL" id="CP003248">
    <property type="protein sequence ID" value="AFN51175.1"/>
    <property type="molecule type" value="Genomic_DNA"/>
</dbReference>
<dbReference type="EMBL" id="JLDD01000038">
    <property type="protein sequence ID" value="KBJ29228.1"/>
    <property type="molecule type" value="Genomic_DNA"/>
</dbReference>
<dbReference type="RefSeq" id="NP_217698.1">
    <property type="nucleotide sequence ID" value="NC_000962.3"/>
</dbReference>
<dbReference type="RefSeq" id="WP_003899954.1">
    <property type="nucleotide sequence ID" value="NZ_NVQJ01000019.1"/>
</dbReference>
<dbReference type="SMR" id="O53332"/>
<dbReference type="STRING" id="83332.Rv3182"/>
<dbReference type="PaxDb" id="83332-Rv3182"/>
<dbReference type="DNASU" id="888795"/>
<dbReference type="GeneID" id="888795"/>
<dbReference type="KEGG" id="mtu:Rv3182"/>
<dbReference type="KEGG" id="mtv:RVBD_3182"/>
<dbReference type="PATRIC" id="fig|83332.111.peg.3545"/>
<dbReference type="TubercuList" id="Rv3182"/>
<dbReference type="eggNOG" id="COG4683">
    <property type="taxonomic scope" value="Bacteria"/>
</dbReference>
<dbReference type="HOGENOM" id="CLU_107454_1_1_11"/>
<dbReference type="InParanoid" id="O53332"/>
<dbReference type="OrthoDB" id="330810at2"/>
<dbReference type="PhylomeDB" id="O53332"/>
<dbReference type="Proteomes" id="UP000001584">
    <property type="component" value="Chromosome"/>
</dbReference>
<dbReference type="InterPro" id="IPR009241">
    <property type="entry name" value="HigB-like"/>
</dbReference>
<dbReference type="Pfam" id="PF05973">
    <property type="entry name" value="Gp49"/>
    <property type="match status" value="1"/>
</dbReference>
<keyword id="KW-1185">Reference proteome</keyword>
<keyword id="KW-1277">Toxin-antitoxin system</keyword>
<organism>
    <name type="scientific">Mycobacterium tuberculosis (strain ATCC 25618 / H37Rv)</name>
    <dbReference type="NCBI Taxonomy" id="83332"/>
    <lineage>
        <taxon>Bacteria</taxon>
        <taxon>Bacillati</taxon>
        <taxon>Actinomycetota</taxon>
        <taxon>Actinomycetes</taxon>
        <taxon>Mycobacteriales</taxon>
        <taxon>Mycobacteriaceae</taxon>
        <taxon>Mycobacterium</taxon>
        <taxon>Mycobacterium tuberculosis complex</taxon>
    </lineage>
</organism>
<protein>
    <recommendedName>
        <fullName evidence="2">Putative toxin HigB3</fullName>
    </recommendedName>
</protein>
<name>HIGB3_MYCTU</name>
<feature type="chain" id="PRO_0000432914" description="Putative toxin HigB3">
    <location>
        <begin position="1"/>
        <end position="114"/>
    </location>
</feature>